<sequence length="605" mass="66478">MDQHKGDASLGGIVKALGLVFGDIGTSPIYTLTVIFTLTQPTRENVFGILSLVFWTMTILVTMEYAWLAMSLGRKGQGGEIVLREIIMKLVKTGRLVAFAGFLSFVGVSLLLGDGVITPAISILSAVEGLLLIPGLEGLSTGTLVAIAAAIAIGLFSVQFKGTDRVAGAFGPIMAVWFSTLAVTGVVSALSMPEIVEAINPWHAFTFFRENGLAGYFVLSEVILCSTGGEALYADMGHLGRRPIVKSWYFVFMALYLNYLGQGVFAITHPEAKNLLFGMVRDQMPTLYIPFLILTIMATIIASQSIISGVFSIVYQGITTRLLPLMRVDYTSREIKSQIYLGAVNWSLMVAVILVMLLFRKSENLAAAYGMAVTGSMTITGIMMIIVFAHTTKKWRALVALVITLIDAAYLLSTFSKIPHGAYWSLILASIPFVTIIIWTRGQRSLYHALKPLDLETFLISYEQIYAKGPIRGTGLFFTRDTDVVPPYVVHCIIRSNIIYERNVFISLVITDEPLGVETELIKGIGPGLDAFRIEAGYMEVVDIEALLKANGIQEKVIFYGVEDISTRNPLWRVFSVFKKLTPNFVQFHKLPASRLQGVVTRVEM</sequence>
<feature type="chain" id="PRO_0000279786" description="Probable potassium transport system protein Kup 1">
    <location>
        <begin position="1"/>
        <end position="605"/>
    </location>
</feature>
<feature type="transmembrane region" description="Helical" evidence="1">
    <location>
        <begin position="16"/>
        <end position="36"/>
    </location>
</feature>
<feature type="transmembrane region" description="Helical" evidence="1">
    <location>
        <begin position="46"/>
        <end position="66"/>
    </location>
</feature>
<feature type="transmembrane region" description="Helical" evidence="1">
    <location>
        <begin position="97"/>
        <end position="117"/>
    </location>
</feature>
<feature type="transmembrane region" description="Helical" evidence="1">
    <location>
        <begin position="138"/>
        <end position="158"/>
    </location>
</feature>
<feature type="transmembrane region" description="Helical" evidence="1">
    <location>
        <begin position="166"/>
        <end position="186"/>
    </location>
</feature>
<feature type="transmembrane region" description="Helical" evidence="1">
    <location>
        <begin position="212"/>
        <end position="232"/>
    </location>
</feature>
<feature type="transmembrane region" description="Helical" evidence="1">
    <location>
        <begin position="248"/>
        <end position="268"/>
    </location>
</feature>
<feature type="transmembrane region" description="Helical" evidence="1">
    <location>
        <begin position="287"/>
        <end position="307"/>
    </location>
</feature>
<feature type="transmembrane region" description="Helical" evidence="1">
    <location>
        <begin position="339"/>
        <end position="359"/>
    </location>
</feature>
<feature type="transmembrane region" description="Helical" evidence="1">
    <location>
        <begin position="368"/>
        <end position="388"/>
    </location>
</feature>
<feature type="transmembrane region" description="Helical" evidence="1">
    <location>
        <begin position="397"/>
        <end position="417"/>
    </location>
</feature>
<feature type="transmembrane region" description="Helical" evidence="1">
    <location>
        <begin position="418"/>
        <end position="438"/>
    </location>
</feature>
<evidence type="ECO:0000255" key="1">
    <source>
        <dbReference type="HAMAP-Rule" id="MF_01522"/>
    </source>
</evidence>
<organism>
    <name type="scientific">Geobacter metallireducens (strain ATCC 53774 / DSM 7210 / GS-15)</name>
    <dbReference type="NCBI Taxonomy" id="269799"/>
    <lineage>
        <taxon>Bacteria</taxon>
        <taxon>Pseudomonadati</taxon>
        <taxon>Thermodesulfobacteriota</taxon>
        <taxon>Desulfuromonadia</taxon>
        <taxon>Geobacterales</taxon>
        <taxon>Geobacteraceae</taxon>
        <taxon>Geobacter</taxon>
    </lineage>
</organism>
<accession>Q39ZN6</accession>
<reference key="1">
    <citation type="journal article" date="2009" name="BMC Microbiol.">
        <title>The genome sequence of Geobacter metallireducens: features of metabolism, physiology and regulation common and dissimilar to Geobacter sulfurreducens.</title>
        <authorList>
            <person name="Aklujkar M."/>
            <person name="Krushkal J."/>
            <person name="DiBartolo G."/>
            <person name="Lapidus A."/>
            <person name="Land M.L."/>
            <person name="Lovley D.R."/>
        </authorList>
    </citation>
    <scope>NUCLEOTIDE SEQUENCE [LARGE SCALE GENOMIC DNA]</scope>
    <source>
        <strain>ATCC 53774 / DSM 7210 / GS-15</strain>
    </source>
</reference>
<protein>
    <recommendedName>
        <fullName evidence="1">Probable potassium transport system protein Kup 1</fullName>
    </recommendedName>
</protein>
<dbReference type="EMBL" id="CP000148">
    <property type="protein sequence ID" value="ABB30288.1"/>
    <property type="molecule type" value="Genomic_DNA"/>
</dbReference>
<dbReference type="RefSeq" id="WP_004513805.1">
    <property type="nucleotide sequence ID" value="NC_007517.1"/>
</dbReference>
<dbReference type="STRING" id="269799.Gmet_0038"/>
<dbReference type="KEGG" id="gme:Gmet_0038"/>
<dbReference type="eggNOG" id="COG3158">
    <property type="taxonomic scope" value="Bacteria"/>
</dbReference>
<dbReference type="HOGENOM" id="CLU_008142_4_2_7"/>
<dbReference type="Proteomes" id="UP000007073">
    <property type="component" value="Chromosome"/>
</dbReference>
<dbReference type="GO" id="GO:0005886">
    <property type="term" value="C:plasma membrane"/>
    <property type="evidence" value="ECO:0007669"/>
    <property type="project" value="UniProtKB-SubCell"/>
</dbReference>
<dbReference type="GO" id="GO:0015079">
    <property type="term" value="F:potassium ion transmembrane transporter activity"/>
    <property type="evidence" value="ECO:0007669"/>
    <property type="project" value="UniProtKB-UniRule"/>
</dbReference>
<dbReference type="GO" id="GO:0015293">
    <property type="term" value="F:symporter activity"/>
    <property type="evidence" value="ECO:0007669"/>
    <property type="project" value="UniProtKB-UniRule"/>
</dbReference>
<dbReference type="HAMAP" id="MF_01522">
    <property type="entry name" value="Kup"/>
    <property type="match status" value="1"/>
</dbReference>
<dbReference type="InterPro" id="IPR003855">
    <property type="entry name" value="K+_transporter"/>
</dbReference>
<dbReference type="InterPro" id="IPR053952">
    <property type="entry name" value="K_trans_C"/>
</dbReference>
<dbReference type="InterPro" id="IPR053951">
    <property type="entry name" value="K_trans_N"/>
</dbReference>
<dbReference type="InterPro" id="IPR023051">
    <property type="entry name" value="Kup"/>
</dbReference>
<dbReference type="PANTHER" id="PTHR30540:SF83">
    <property type="entry name" value="K+ POTASSIUM TRANSPORTER"/>
    <property type="match status" value="1"/>
</dbReference>
<dbReference type="PANTHER" id="PTHR30540">
    <property type="entry name" value="OSMOTIC STRESS POTASSIUM TRANSPORTER"/>
    <property type="match status" value="1"/>
</dbReference>
<dbReference type="Pfam" id="PF02705">
    <property type="entry name" value="K_trans"/>
    <property type="match status" value="1"/>
</dbReference>
<dbReference type="Pfam" id="PF22776">
    <property type="entry name" value="K_trans_C"/>
    <property type="match status" value="1"/>
</dbReference>
<keyword id="KW-0997">Cell inner membrane</keyword>
<keyword id="KW-1003">Cell membrane</keyword>
<keyword id="KW-0406">Ion transport</keyword>
<keyword id="KW-0472">Membrane</keyword>
<keyword id="KW-0630">Potassium</keyword>
<keyword id="KW-0633">Potassium transport</keyword>
<keyword id="KW-1185">Reference proteome</keyword>
<keyword id="KW-0769">Symport</keyword>
<keyword id="KW-0812">Transmembrane</keyword>
<keyword id="KW-1133">Transmembrane helix</keyword>
<keyword id="KW-0813">Transport</keyword>
<name>KUP1_GEOMG</name>
<comment type="function">
    <text evidence="1">Transport of potassium into the cell. Likely operates as a K(+):H(+) symporter.</text>
</comment>
<comment type="catalytic activity">
    <reaction evidence="1">
        <text>K(+)(in) + H(+)(in) = K(+)(out) + H(+)(out)</text>
        <dbReference type="Rhea" id="RHEA:28490"/>
        <dbReference type="ChEBI" id="CHEBI:15378"/>
        <dbReference type="ChEBI" id="CHEBI:29103"/>
    </reaction>
    <physiologicalReaction direction="right-to-left" evidence="1">
        <dbReference type="Rhea" id="RHEA:28492"/>
    </physiologicalReaction>
</comment>
<comment type="subcellular location">
    <subcellularLocation>
        <location evidence="1">Cell inner membrane</location>
        <topology evidence="1">Multi-pass membrane protein</topology>
    </subcellularLocation>
</comment>
<comment type="similarity">
    <text evidence="1">Belongs to the HAK/KUP transporter (TC 2.A.72) family.</text>
</comment>
<proteinExistence type="inferred from homology"/>
<gene>
    <name evidence="1" type="primary">kup1</name>
    <name type="ordered locus">Gmet_0038</name>
</gene>